<keyword id="KW-0066">ATP synthesis</keyword>
<keyword id="KW-0067">ATP-binding</keyword>
<keyword id="KW-0139">CF(1)</keyword>
<keyword id="KW-0375">Hydrogen ion transport</keyword>
<keyword id="KW-0406">Ion transport</keyword>
<keyword id="KW-0472">Membrane</keyword>
<keyword id="KW-0547">Nucleotide-binding</keyword>
<keyword id="KW-1185">Reference proteome</keyword>
<keyword id="KW-0793">Thylakoid</keyword>
<keyword id="KW-1278">Translocase</keyword>
<keyword id="KW-0813">Transport</keyword>
<comment type="function">
    <text evidence="1">Produces ATP from ADP in the presence of a proton gradient across the membrane. The catalytic sites are hosted primarily by the beta subunits.</text>
</comment>
<comment type="catalytic activity">
    <reaction evidence="1">
        <text>ATP + H2O + 4 H(+)(in) = ADP + phosphate + 5 H(+)(out)</text>
        <dbReference type="Rhea" id="RHEA:57720"/>
        <dbReference type="ChEBI" id="CHEBI:15377"/>
        <dbReference type="ChEBI" id="CHEBI:15378"/>
        <dbReference type="ChEBI" id="CHEBI:30616"/>
        <dbReference type="ChEBI" id="CHEBI:43474"/>
        <dbReference type="ChEBI" id="CHEBI:456216"/>
        <dbReference type="EC" id="7.1.2.2"/>
    </reaction>
</comment>
<comment type="subunit">
    <text evidence="1">F-type ATPases have 2 components, CF(1) - the catalytic core - and CF(0) - the membrane proton channel. CF(1) has five subunits: alpha(3), beta(3), gamma(1), delta(1), epsilon(1). CF(0) has four main subunits: a(1), b(1), b'(1) and c(9-12).</text>
</comment>
<comment type="subcellular location">
    <subcellularLocation>
        <location evidence="1">Cellular thylakoid membrane</location>
        <topology evidence="1">Peripheral membrane protein</topology>
    </subcellularLocation>
</comment>
<comment type="similarity">
    <text evidence="1">Belongs to the ATPase alpha/beta chains family.</text>
</comment>
<gene>
    <name evidence="1" type="primary">atpD</name>
    <name evidence="1" type="synonym">atpB</name>
    <name type="ordered locus">Pro_1591</name>
</gene>
<dbReference type="EC" id="7.1.2.2" evidence="1"/>
<dbReference type="EMBL" id="AE017126">
    <property type="protein sequence ID" value="AAQ00635.1"/>
    <property type="molecule type" value="Genomic_DNA"/>
</dbReference>
<dbReference type="RefSeq" id="NP_875982.1">
    <property type="nucleotide sequence ID" value="NC_005042.1"/>
</dbReference>
<dbReference type="RefSeq" id="WP_011125741.1">
    <property type="nucleotide sequence ID" value="NC_005042.1"/>
</dbReference>
<dbReference type="SMR" id="Q7VA76"/>
<dbReference type="STRING" id="167539.Pro_1591"/>
<dbReference type="EnsemblBacteria" id="AAQ00635">
    <property type="protein sequence ID" value="AAQ00635"/>
    <property type="gene ID" value="Pro_1591"/>
</dbReference>
<dbReference type="KEGG" id="pma:Pro_1591"/>
<dbReference type="PATRIC" id="fig|167539.5.peg.1682"/>
<dbReference type="eggNOG" id="COG0055">
    <property type="taxonomic scope" value="Bacteria"/>
</dbReference>
<dbReference type="HOGENOM" id="CLU_022398_0_2_3"/>
<dbReference type="OrthoDB" id="9801639at2"/>
<dbReference type="Proteomes" id="UP000001420">
    <property type="component" value="Chromosome"/>
</dbReference>
<dbReference type="GO" id="GO:0031676">
    <property type="term" value="C:plasma membrane-derived thylakoid membrane"/>
    <property type="evidence" value="ECO:0007669"/>
    <property type="project" value="UniProtKB-SubCell"/>
</dbReference>
<dbReference type="GO" id="GO:0045259">
    <property type="term" value="C:proton-transporting ATP synthase complex"/>
    <property type="evidence" value="ECO:0007669"/>
    <property type="project" value="UniProtKB-KW"/>
</dbReference>
<dbReference type="GO" id="GO:0005524">
    <property type="term" value="F:ATP binding"/>
    <property type="evidence" value="ECO:0007669"/>
    <property type="project" value="UniProtKB-UniRule"/>
</dbReference>
<dbReference type="GO" id="GO:0016887">
    <property type="term" value="F:ATP hydrolysis activity"/>
    <property type="evidence" value="ECO:0007669"/>
    <property type="project" value="InterPro"/>
</dbReference>
<dbReference type="GO" id="GO:0046933">
    <property type="term" value="F:proton-transporting ATP synthase activity, rotational mechanism"/>
    <property type="evidence" value="ECO:0007669"/>
    <property type="project" value="UniProtKB-UniRule"/>
</dbReference>
<dbReference type="CDD" id="cd18110">
    <property type="entry name" value="ATP-synt_F1_beta_C"/>
    <property type="match status" value="1"/>
</dbReference>
<dbReference type="CDD" id="cd18115">
    <property type="entry name" value="ATP-synt_F1_beta_N"/>
    <property type="match status" value="1"/>
</dbReference>
<dbReference type="CDD" id="cd01133">
    <property type="entry name" value="F1-ATPase_beta_CD"/>
    <property type="match status" value="1"/>
</dbReference>
<dbReference type="FunFam" id="1.10.1140.10:FF:000001">
    <property type="entry name" value="ATP synthase subunit beta"/>
    <property type="match status" value="1"/>
</dbReference>
<dbReference type="FunFam" id="3.40.50.300:FF:000026">
    <property type="entry name" value="ATP synthase subunit beta"/>
    <property type="match status" value="1"/>
</dbReference>
<dbReference type="FunFam" id="2.40.10.170:FF:000002">
    <property type="entry name" value="ATP synthase subunit beta, chloroplastic"/>
    <property type="match status" value="1"/>
</dbReference>
<dbReference type="Gene3D" id="2.40.10.170">
    <property type="match status" value="1"/>
</dbReference>
<dbReference type="Gene3D" id="1.10.1140.10">
    <property type="entry name" value="Bovine Mitochondrial F1-atpase, Atp Synthase Beta Chain, Chain D, domain 3"/>
    <property type="match status" value="1"/>
</dbReference>
<dbReference type="Gene3D" id="3.40.50.300">
    <property type="entry name" value="P-loop containing nucleotide triphosphate hydrolases"/>
    <property type="match status" value="1"/>
</dbReference>
<dbReference type="HAMAP" id="MF_01347">
    <property type="entry name" value="ATP_synth_beta_bact"/>
    <property type="match status" value="1"/>
</dbReference>
<dbReference type="InterPro" id="IPR003593">
    <property type="entry name" value="AAA+_ATPase"/>
</dbReference>
<dbReference type="InterPro" id="IPR055190">
    <property type="entry name" value="ATP-synt_VA_C"/>
</dbReference>
<dbReference type="InterPro" id="IPR005722">
    <property type="entry name" value="ATP_synth_F1_bsu"/>
</dbReference>
<dbReference type="InterPro" id="IPR020003">
    <property type="entry name" value="ATPase_a/bsu_AS"/>
</dbReference>
<dbReference type="InterPro" id="IPR050053">
    <property type="entry name" value="ATPase_alpha/beta_chains"/>
</dbReference>
<dbReference type="InterPro" id="IPR004100">
    <property type="entry name" value="ATPase_F1/V1/A1_a/bsu_N"/>
</dbReference>
<dbReference type="InterPro" id="IPR036121">
    <property type="entry name" value="ATPase_F1/V1/A1_a/bsu_N_sf"/>
</dbReference>
<dbReference type="InterPro" id="IPR000194">
    <property type="entry name" value="ATPase_F1/V1/A1_a/bsu_nucl-bd"/>
</dbReference>
<dbReference type="InterPro" id="IPR024034">
    <property type="entry name" value="ATPase_F1/V1_b/a_C"/>
</dbReference>
<dbReference type="InterPro" id="IPR027417">
    <property type="entry name" value="P-loop_NTPase"/>
</dbReference>
<dbReference type="NCBIfam" id="TIGR01039">
    <property type="entry name" value="atpD"/>
    <property type="match status" value="1"/>
</dbReference>
<dbReference type="PANTHER" id="PTHR15184">
    <property type="entry name" value="ATP SYNTHASE"/>
    <property type="match status" value="1"/>
</dbReference>
<dbReference type="PANTHER" id="PTHR15184:SF71">
    <property type="entry name" value="ATP SYNTHASE SUBUNIT BETA, MITOCHONDRIAL"/>
    <property type="match status" value="1"/>
</dbReference>
<dbReference type="Pfam" id="PF00006">
    <property type="entry name" value="ATP-synt_ab"/>
    <property type="match status" value="1"/>
</dbReference>
<dbReference type="Pfam" id="PF02874">
    <property type="entry name" value="ATP-synt_ab_N"/>
    <property type="match status" value="1"/>
</dbReference>
<dbReference type="Pfam" id="PF22919">
    <property type="entry name" value="ATP-synt_VA_C"/>
    <property type="match status" value="1"/>
</dbReference>
<dbReference type="SMART" id="SM00382">
    <property type="entry name" value="AAA"/>
    <property type="match status" value="1"/>
</dbReference>
<dbReference type="SUPFAM" id="SSF47917">
    <property type="entry name" value="C-terminal domain of alpha and beta subunits of F1 ATP synthase"/>
    <property type="match status" value="1"/>
</dbReference>
<dbReference type="SUPFAM" id="SSF50615">
    <property type="entry name" value="N-terminal domain of alpha and beta subunits of F1 ATP synthase"/>
    <property type="match status" value="1"/>
</dbReference>
<dbReference type="SUPFAM" id="SSF52540">
    <property type="entry name" value="P-loop containing nucleoside triphosphate hydrolases"/>
    <property type="match status" value="1"/>
</dbReference>
<dbReference type="PROSITE" id="PS00152">
    <property type="entry name" value="ATPASE_ALPHA_BETA"/>
    <property type="match status" value="1"/>
</dbReference>
<organism>
    <name type="scientific">Prochlorococcus marinus (strain SARG / CCMP1375 / SS120)</name>
    <dbReference type="NCBI Taxonomy" id="167539"/>
    <lineage>
        <taxon>Bacteria</taxon>
        <taxon>Bacillati</taxon>
        <taxon>Cyanobacteriota</taxon>
        <taxon>Cyanophyceae</taxon>
        <taxon>Synechococcales</taxon>
        <taxon>Prochlorococcaceae</taxon>
        <taxon>Prochlorococcus</taxon>
    </lineage>
</organism>
<sequence length="488" mass="52278">MAAAATASTGTKGVVRQVIGPVLDVEFPAGKLPKILNALRIEGKNPAGQDVALTAEVQQLLGDHRVRAVAMSGTDGLVRGMEAIDTGSAISVPVGEATLGRIFNVLGEPVDEQGPVKTKTTSPIHREAPKLTDLETKPKVFETGIKVIDLLAPYRQGGKVGLFGGAGVGKTVLIQELINNIAKEHGGVSVFGGVGERTREGNDLYEEFKESGVINADDLTQSKVALCFGQMNEPPGARMRVGLSALTMAEHFRDVNKQDVLLFVDNIFRFVQAGSEVSALLGRMPSAVGYQPTLGTDVGELQERITSTLEGSITSIQAVYVPADDLTDPAPATTFAHLDATTVLARALAAKGIYPAVDPLDSTSTMLQPSVVGDEHYRTARAVQSTLQRYKELQDIIAILGLDELSEDDRRTVDRARKIEKFLSQPFFVAEIFTGMSGKYVKLEDTIAGFNMILSGELDDLPEQAFYLVGNITEVKEKAQKISADAKK</sequence>
<accession>Q7VA76</accession>
<evidence type="ECO:0000255" key="1">
    <source>
        <dbReference type="HAMAP-Rule" id="MF_01347"/>
    </source>
</evidence>
<reference key="1">
    <citation type="journal article" date="2003" name="Proc. Natl. Acad. Sci. U.S.A.">
        <title>Genome sequence of the cyanobacterium Prochlorococcus marinus SS120, a nearly minimal oxyphototrophic genome.</title>
        <authorList>
            <person name="Dufresne A."/>
            <person name="Salanoubat M."/>
            <person name="Partensky F."/>
            <person name="Artiguenave F."/>
            <person name="Axmann I.M."/>
            <person name="Barbe V."/>
            <person name="Duprat S."/>
            <person name="Galperin M.Y."/>
            <person name="Koonin E.V."/>
            <person name="Le Gall F."/>
            <person name="Makarova K.S."/>
            <person name="Ostrowski M."/>
            <person name="Oztas S."/>
            <person name="Robert C."/>
            <person name="Rogozin I.B."/>
            <person name="Scanlan D.J."/>
            <person name="Tandeau de Marsac N."/>
            <person name="Weissenbach J."/>
            <person name="Wincker P."/>
            <person name="Wolf Y.I."/>
            <person name="Hess W.R."/>
        </authorList>
    </citation>
    <scope>NUCLEOTIDE SEQUENCE [LARGE SCALE GENOMIC DNA]</scope>
    <source>
        <strain>SARG / CCMP1375 / SS120</strain>
    </source>
</reference>
<protein>
    <recommendedName>
        <fullName evidence="1">ATP synthase subunit beta</fullName>
        <ecNumber evidence="1">7.1.2.2</ecNumber>
    </recommendedName>
    <alternativeName>
        <fullName evidence="1">ATP synthase F1 sector subunit beta</fullName>
    </alternativeName>
    <alternativeName>
        <fullName evidence="1">F-ATPase subunit beta</fullName>
    </alternativeName>
</protein>
<proteinExistence type="inferred from homology"/>
<feature type="chain" id="PRO_0000254331" description="ATP synthase subunit beta">
    <location>
        <begin position="1"/>
        <end position="488"/>
    </location>
</feature>
<feature type="binding site" evidence="1">
    <location>
        <begin position="164"/>
        <end position="171"/>
    </location>
    <ligand>
        <name>ATP</name>
        <dbReference type="ChEBI" id="CHEBI:30616"/>
    </ligand>
</feature>
<name>ATPB_PROMA</name>